<keyword id="KW-0131">Cell cycle</keyword>
<keyword id="KW-0132">Cell division</keyword>
<keyword id="KW-0137">Centromere</keyword>
<keyword id="KW-0158">Chromosome</keyword>
<keyword id="KW-0175">Coiled coil</keyword>
<keyword id="KW-0995">Kinetochore</keyword>
<keyword id="KW-0469">Meiosis</keyword>
<keyword id="KW-0498">Mitosis</keyword>
<keyword id="KW-0539">Nucleus</keyword>
<keyword id="KW-1185">Reference proteome</keyword>
<reference key="1">
    <citation type="journal article" date="2004" name="Nature">
        <title>Genome evolution in yeasts.</title>
        <authorList>
            <person name="Dujon B."/>
            <person name="Sherman D."/>
            <person name="Fischer G."/>
            <person name="Durrens P."/>
            <person name="Casaregola S."/>
            <person name="Lafontaine I."/>
            <person name="de Montigny J."/>
            <person name="Marck C."/>
            <person name="Neuveglise C."/>
            <person name="Talla E."/>
            <person name="Goffard N."/>
            <person name="Frangeul L."/>
            <person name="Aigle M."/>
            <person name="Anthouard V."/>
            <person name="Babour A."/>
            <person name="Barbe V."/>
            <person name="Barnay S."/>
            <person name="Blanchin S."/>
            <person name="Beckerich J.-M."/>
            <person name="Beyne E."/>
            <person name="Bleykasten C."/>
            <person name="Boisrame A."/>
            <person name="Boyer J."/>
            <person name="Cattolico L."/>
            <person name="Confanioleri F."/>
            <person name="de Daruvar A."/>
            <person name="Despons L."/>
            <person name="Fabre E."/>
            <person name="Fairhead C."/>
            <person name="Ferry-Dumazet H."/>
            <person name="Groppi A."/>
            <person name="Hantraye F."/>
            <person name="Hennequin C."/>
            <person name="Jauniaux N."/>
            <person name="Joyet P."/>
            <person name="Kachouri R."/>
            <person name="Kerrest A."/>
            <person name="Koszul R."/>
            <person name="Lemaire M."/>
            <person name="Lesur I."/>
            <person name="Ma L."/>
            <person name="Muller H."/>
            <person name="Nicaud J.-M."/>
            <person name="Nikolski M."/>
            <person name="Oztas S."/>
            <person name="Ozier-Kalogeropoulos O."/>
            <person name="Pellenz S."/>
            <person name="Potier S."/>
            <person name="Richard G.-F."/>
            <person name="Straub M.-L."/>
            <person name="Suleau A."/>
            <person name="Swennen D."/>
            <person name="Tekaia F."/>
            <person name="Wesolowski-Louvel M."/>
            <person name="Westhof E."/>
            <person name="Wirth B."/>
            <person name="Zeniou-Meyer M."/>
            <person name="Zivanovic Y."/>
            <person name="Bolotin-Fukuhara M."/>
            <person name="Thierry A."/>
            <person name="Bouchier C."/>
            <person name="Caudron B."/>
            <person name="Scarpelli C."/>
            <person name="Gaillardin C."/>
            <person name="Weissenbach J."/>
            <person name="Wincker P."/>
            <person name="Souciet J.-L."/>
        </authorList>
    </citation>
    <scope>NUCLEOTIDE SEQUENCE [LARGE SCALE GENOMIC DNA]</scope>
    <source>
        <strain>ATCC 8585 / CBS 2359 / DSM 70799 / NBRC 1267 / NRRL Y-1140 / WM37</strain>
    </source>
</reference>
<reference key="2">
    <citation type="journal article" date="2017" name="EMBO J.">
        <title>Molecular basis for inner kinetochore configuration through RWD domain-peptide interactions.</title>
        <authorList>
            <person name="Schmitzberger F."/>
            <person name="Richter M.M."/>
            <person name="Gordiyenko Y."/>
            <person name="Robinson C.V."/>
            <person name="Dadlez M."/>
            <person name="Westermann S."/>
        </authorList>
    </citation>
    <scope>SUBUNIT</scope>
    <scope>INTERACTION WITH AME1 AND OKP1</scope>
    <scope>FUNCTION</scope>
</reference>
<protein>
    <recommendedName>
        <fullName>Inner kinetochore subunit NKP2</fullName>
    </recommendedName>
    <alternativeName>
        <fullName>Constitutive centromere-associated network protein NKP2</fullName>
    </alternativeName>
</protein>
<name>NKP2_KLULA</name>
<evidence type="ECO:0000250" key="1">
    <source>
        <dbReference type="UniProtKB" id="Q06162"/>
    </source>
</evidence>
<evidence type="ECO:0000255" key="2"/>
<evidence type="ECO:0000269" key="3">
    <source>
    </source>
</evidence>
<evidence type="ECO:0000305" key="4"/>
<organism>
    <name type="scientific">Kluyveromyces lactis (strain ATCC 8585 / CBS 2359 / DSM 70799 / NBRC 1267 / NRRL Y-1140 / WM37)</name>
    <name type="common">Yeast</name>
    <name type="synonym">Candida sphaerica</name>
    <dbReference type="NCBI Taxonomy" id="284590"/>
    <lineage>
        <taxon>Eukaryota</taxon>
        <taxon>Fungi</taxon>
        <taxon>Dikarya</taxon>
        <taxon>Ascomycota</taxon>
        <taxon>Saccharomycotina</taxon>
        <taxon>Saccharomycetes</taxon>
        <taxon>Saccharomycetales</taxon>
        <taxon>Saccharomycetaceae</taxon>
        <taxon>Kluyveromyces</taxon>
    </lineage>
</organism>
<proteinExistence type="evidence at protein level"/>
<accession>Q6CSR8</accession>
<sequence length="151" mass="17658">MLHEVLYKHLDGILVSRLYTEDQFVDLFSRTIPESNTVIASQLYKSYEENDQRIIEKIDKLIDNKLSLIRVELEREQIEDSISLEEVNKLLHSIDDMLQQHLNQLNIELDNKNTKLLKYAMELSDIEAIDTSMYDNVAKLITDMETNQPSS</sequence>
<gene>
    <name type="primary">NKP2</name>
    <name type="ordered locus">KLLA0C18425g</name>
</gene>
<dbReference type="EMBL" id="CR382123">
    <property type="protein sequence ID" value="CAH01872.1"/>
    <property type="molecule type" value="Genomic_DNA"/>
</dbReference>
<dbReference type="RefSeq" id="XP_453021.1">
    <property type="nucleotide sequence ID" value="XM_453021.1"/>
</dbReference>
<dbReference type="SMR" id="Q6CSR8"/>
<dbReference type="FunCoup" id="Q6CSR8">
    <property type="interactions" value="75"/>
</dbReference>
<dbReference type="PaxDb" id="284590-Q6CSR8"/>
<dbReference type="KEGG" id="kla:KLLA0_C18425g"/>
<dbReference type="HOGENOM" id="CLU_1731740_0_0_1"/>
<dbReference type="InParanoid" id="Q6CSR8"/>
<dbReference type="Proteomes" id="UP000000598">
    <property type="component" value="Chromosome C"/>
</dbReference>
<dbReference type="GO" id="GO:0000776">
    <property type="term" value="C:kinetochore"/>
    <property type="evidence" value="ECO:0007669"/>
    <property type="project" value="UniProtKB-KW"/>
</dbReference>
<dbReference type="GO" id="GO:0005634">
    <property type="term" value="C:nucleus"/>
    <property type="evidence" value="ECO:0007669"/>
    <property type="project" value="UniProtKB-SubCell"/>
</dbReference>
<dbReference type="GO" id="GO:0051301">
    <property type="term" value="P:cell division"/>
    <property type="evidence" value="ECO:0007669"/>
    <property type="project" value="UniProtKB-KW"/>
</dbReference>
<dbReference type="GO" id="GO:0051321">
    <property type="term" value="P:meiotic cell cycle"/>
    <property type="evidence" value="ECO:0007669"/>
    <property type="project" value="UniProtKB-KW"/>
</dbReference>
<comment type="function">
    <text evidence="1 3">Component of the kinetochore, a multiprotein complex that assembles on centromeric DNA and attaches chromosomes to spindle microtubules, mediating chromosome segregation and sister chromatid segregation during meiosis and mitosis (By similarity). Component of the inner kinetochore constitutive centromere-associated network (CCAN), which serves as a structural platform for outer kinetochore assembly (PubMed:29046335).</text>
</comment>
<comment type="subunit">
    <text evidence="1 3">Component of the inner kinetochore constitutive centromere-associated network (CCAN) (also known as central kinetochore CTF19 complex in yeast) (By similarity). NKP2 interacts directly with OKP1 and AME1 (PubMed:29046335).</text>
</comment>
<comment type="subcellular location">
    <subcellularLocation>
        <location evidence="1">Nucleus</location>
    </subcellularLocation>
    <subcellularLocation>
        <location evidence="1">Chromosome</location>
        <location evidence="1">Centromere</location>
        <location evidence="1">Kinetochore</location>
    </subcellularLocation>
</comment>
<comment type="similarity">
    <text evidence="4">Belongs to the NKP2 family.</text>
</comment>
<feature type="chain" id="PRO_0000443075" description="Inner kinetochore subunit NKP2">
    <location>
        <begin position="1"/>
        <end position="151"/>
    </location>
</feature>
<feature type="coiled-coil region" evidence="2">
    <location>
        <begin position="44"/>
        <end position="64"/>
    </location>
</feature>
<feature type="coiled-coil region" evidence="2">
    <location>
        <begin position="102"/>
        <end position="122"/>
    </location>
</feature>